<organism>
    <name type="scientific">Burkholderia mallei (strain NCTC 10229)</name>
    <dbReference type="NCBI Taxonomy" id="412022"/>
    <lineage>
        <taxon>Bacteria</taxon>
        <taxon>Pseudomonadati</taxon>
        <taxon>Pseudomonadota</taxon>
        <taxon>Betaproteobacteria</taxon>
        <taxon>Burkholderiales</taxon>
        <taxon>Burkholderiaceae</taxon>
        <taxon>Burkholderia</taxon>
        <taxon>pseudomallei group</taxon>
    </lineage>
</organism>
<sequence>MNDSVKTSLKRTLVGKVVSNKMDKTVTVLVEHRVKHPIYGKYVVRSKKYHAHDEANTYNEGDLVEIQETRPVSKTKAWAVSRLVEAARVI</sequence>
<comment type="function">
    <text evidence="1">One of the primary rRNA binding proteins, it binds specifically to the 5'-end of 16S ribosomal RNA.</text>
</comment>
<comment type="subunit">
    <text evidence="1">Part of the 30S ribosomal subunit.</text>
</comment>
<comment type="similarity">
    <text evidence="1">Belongs to the universal ribosomal protein uS17 family.</text>
</comment>
<name>RS17_BURM9</name>
<dbReference type="EMBL" id="CP000546">
    <property type="protein sequence ID" value="ABN01927.1"/>
    <property type="molecule type" value="Genomic_DNA"/>
</dbReference>
<dbReference type="RefSeq" id="WP_004201274.1">
    <property type="nucleotide sequence ID" value="NC_008836.1"/>
</dbReference>
<dbReference type="SMR" id="A2S7I5"/>
<dbReference type="GeneID" id="93061823"/>
<dbReference type="KEGG" id="bml:BMA10229_A1933"/>
<dbReference type="HOGENOM" id="CLU_073626_1_1_4"/>
<dbReference type="Proteomes" id="UP000002283">
    <property type="component" value="Chromosome I"/>
</dbReference>
<dbReference type="GO" id="GO:0022627">
    <property type="term" value="C:cytosolic small ribosomal subunit"/>
    <property type="evidence" value="ECO:0007669"/>
    <property type="project" value="TreeGrafter"/>
</dbReference>
<dbReference type="GO" id="GO:0019843">
    <property type="term" value="F:rRNA binding"/>
    <property type="evidence" value="ECO:0007669"/>
    <property type="project" value="UniProtKB-UniRule"/>
</dbReference>
<dbReference type="GO" id="GO:0003735">
    <property type="term" value="F:structural constituent of ribosome"/>
    <property type="evidence" value="ECO:0007669"/>
    <property type="project" value="InterPro"/>
</dbReference>
<dbReference type="GO" id="GO:0006412">
    <property type="term" value="P:translation"/>
    <property type="evidence" value="ECO:0007669"/>
    <property type="project" value="UniProtKB-UniRule"/>
</dbReference>
<dbReference type="CDD" id="cd00364">
    <property type="entry name" value="Ribosomal_uS17"/>
    <property type="match status" value="1"/>
</dbReference>
<dbReference type="Gene3D" id="2.40.50.140">
    <property type="entry name" value="Nucleic acid-binding proteins"/>
    <property type="match status" value="1"/>
</dbReference>
<dbReference type="HAMAP" id="MF_01345_B">
    <property type="entry name" value="Ribosomal_uS17_B"/>
    <property type="match status" value="1"/>
</dbReference>
<dbReference type="InterPro" id="IPR012340">
    <property type="entry name" value="NA-bd_OB-fold"/>
</dbReference>
<dbReference type="InterPro" id="IPR000266">
    <property type="entry name" value="Ribosomal_uS17"/>
</dbReference>
<dbReference type="InterPro" id="IPR019984">
    <property type="entry name" value="Ribosomal_uS17_bact/chlr"/>
</dbReference>
<dbReference type="InterPro" id="IPR019979">
    <property type="entry name" value="Ribosomal_uS17_CS"/>
</dbReference>
<dbReference type="NCBIfam" id="NF004123">
    <property type="entry name" value="PRK05610.1"/>
    <property type="match status" value="1"/>
</dbReference>
<dbReference type="NCBIfam" id="TIGR03635">
    <property type="entry name" value="uS17_bact"/>
    <property type="match status" value="1"/>
</dbReference>
<dbReference type="PANTHER" id="PTHR10744">
    <property type="entry name" value="40S RIBOSOMAL PROTEIN S11 FAMILY MEMBER"/>
    <property type="match status" value="1"/>
</dbReference>
<dbReference type="PANTHER" id="PTHR10744:SF1">
    <property type="entry name" value="SMALL RIBOSOMAL SUBUNIT PROTEIN US17M"/>
    <property type="match status" value="1"/>
</dbReference>
<dbReference type="Pfam" id="PF00366">
    <property type="entry name" value="Ribosomal_S17"/>
    <property type="match status" value="1"/>
</dbReference>
<dbReference type="PRINTS" id="PR00973">
    <property type="entry name" value="RIBOSOMALS17"/>
</dbReference>
<dbReference type="SUPFAM" id="SSF50249">
    <property type="entry name" value="Nucleic acid-binding proteins"/>
    <property type="match status" value="1"/>
</dbReference>
<dbReference type="PROSITE" id="PS00056">
    <property type="entry name" value="RIBOSOMAL_S17"/>
    <property type="match status" value="1"/>
</dbReference>
<protein>
    <recommendedName>
        <fullName evidence="1">Small ribosomal subunit protein uS17</fullName>
    </recommendedName>
    <alternativeName>
        <fullName evidence="2">30S ribosomal protein S17</fullName>
    </alternativeName>
</protein>
<keyword id="KW-0687">Ribonucleoprotein</keyword>
<keyword id="KW-0689">Ribosomal protein</keyword>
<keyword id="KW-0694">RNA-binding</keyword>
<keyword id="KW-0699">rRNA-binding</keyword>
<reference key="1">
    <citation type="journal article" date="2010" name="Genome Biol. Evol.">
        <title>Continuing evolution of Burkholderia mallei through genome reduction and large-scale rearrangements.</title>
        <authorList>
            <person name="Losada L."/>
            <person name="Ronning C.M."/>
            <person name="DeShazer D."/>
            <person name="Woods D."/>
            <person name="Fedorova N."/>
            <person name="Kim H.S."/>
            <person name="Shabalina S.A."/>
            <person name="Pearson T.R."/>
            <person name="Brinkac L."/>
            <person name="Tan P."/>
            <person name="Nandi T."/>
            <person name="Crabtree J."/>
            <person name="Badger J."/>
            <person name="Beckstrom-Sternberg S."/>
            <person name="Saqib M."/>
            <person name="Schutzer S.E."/>
            <person name="Keim P."/>
            <person name="Nierman W.C."/>
        </authorList>
    </citation>
    <scope>NUCLEOTIDE SEQUENCE [LARGE SCALE GENOMIC DNA]</scope>
    <source>
        <strain>NCTC 10229</strain>
    </source>
</reference>
<gene>
    <name evidence="1" type="primary">rpsQ</name>
    <name type="ordered locus">BMA10229_A1933</name>
</gene>
<proteinExistence type="inferred from homology"/>
<feature type="chain" id="PRO_1000054926" description="Small ribosomal subunit protein uS17">
    <location>
        <begin position="1"/>
        <end position="90"/>
    </location>
</feature>
<evidence type="ECO:0000255" key="1">
    <source>
        <dbReference type="HAMAP-Rule" id="MF_01345"/>
    </source>
</evidence>
<evidence type="ECO:0000305" key="2"/>
<accession>A2S7I5</accession>